<gene>
    <name evidence="1" type="primary">rimM</name>
    <name type="ordered locus">PSPA7_1375</name>
</gene>
<proteinExistence type="inferred from homology"/>
<comment type="function">
    <text evidence="1">An accessory protein needed during the final step in the assembly of 30S ribosomal subunit, possibly for assembly of the head region. Essential for efficient processing of 16S rRNA. May be needed both before and after RbfA during the maturation of 16S rRNA. It has affinity for free ribosomal 30S subunits but not for 70S ribosomes.</text>
</comment>
<comment type="subunit">
    <text evidence="1">Binds ribosomal protein uS19.</text>
</comment>
<comment type="subcellular location">
    <subcellularLocation>
        <location evidence="1">Cytoplasm</location>
    </subcellularLocation>
</comment>
<comment type="domain">
    <text evidence="1">The PRC barrel domain binds ribosomal protein uS19.</text>
</comment>
<comment type="similarity">
    <text evidence="1">Belongs to the RimM family.</text>
</comment>
<feature type="chain" id="PRO_1000001215" description="Ribosome maturation factor RimM">
    <location>
        <begin position="1"/>
        <end position="175"/>
    </location>
</feature>
<feature type="domain" description="PRC barrel" evidence="1">
    <location>
        <begin position="98"/>
        <end position="175"/>
    </location>
</feature>
<keyword id="KW-0143">Chaperone</keyword>
<keyword id="KW-0963">Cytoplasm</keyword>
<keyword id="KW-0690">Ribosome biogenesis</keyword>
<keyword id="KW-0698">rRNA processing</keyword>
<evidence type="ECO:0000255" key="1">
    <source>
        <dbReference type="HAMAP-Rule" id="MF_00014"/>
    </source>
</evidence>
<name>RIMM_PSEP7</name>
<reference key="1">
    <citation type="submission" date="2007-06" db="EMBL/GenBank/DDBJ databases">
        <authorList>
            <person name="Dodson R.J."/>
            <person name="Harkins D."/>
            <person name="Paulsen I.T."/>
        </authorList>
    </citation>
    <scope>NUCLEOTIDE SEQUENCE [LARGE SCALE GENOMIC DNA]</scope>
    <source>
        <strain>DSM 24068 / PA7</strain>
    </source>
</reference>
<dbReference type="EMBL" id="CP000744">
    <property type="protein sequence ID" value="ABR82755.1"/>
    <property type="molecule type" value="Genomic_DNA"/>
</dbReference>
<dbReference type="RefSeq" id="WP_012074611.1">
    <property type="nucleotide sequence ID" value="NC_009656.1"/>
</dbReference>
<dbReference type="SMR" id="A6V124"/>
<dbReference type="KEGG" id="pap:PSPA7_1375"/>
<dbReference type="HOGENOM" id="CLU_077636_1_0_6"/>
<dbReference type="Proteomes" id="UP000001582">
    <property type="component" value="Chromosome"/>
</dbReference>
<dbReference type="GO" id="GO:0005737">
    <property type="term" value="C:cytoplasm"/>
    <property type="evidence" value="ECO:0007669"/>
    <property type="project" value="UniProtKB-SubCell"/>
</dbReference>
<dbReference type="GO" id="GO:0005840">
    <property type="term" value="C:ribosome"/>
    <property type="evidence" value="ECO:0007669"/>
    <property type="project" value="InterPro"/>
</dbReference>
<dbReference type="GO" id="GO:0043022">
    <property type="term" value="F:ribosome binding"/>
    <property type="evidence" value="ECO:0007669"/>
    <property type="project" value="InterPro"/>
</dbReference>
<dbReference type="GO" id="GO:0042274">
    <property type="term" value="P:ribosomal small subunit biogenesis"/>
    <property type="evidence" value="ECO:0007669"/>
    <property type="project" value="UniProtKB-UniRule"/>
</dbReference>
<dbReference type="GO" id="GO:0006364">
    <property type="term" value="P:rRNA processing"/>
    <property type="evidence" value="ECO:0007669"/>
    <property type="project" value="UniProtKB-UniRule"/>
</dbReference>
<dbReference type="Gene3D" id="2.30.30.240">
    <property type="entry name" value="PRC-barrel domain"/>
    <property type="match status" value="1"/>
</dbReference>
<dbReference type="Gene3D" id="2.40.30.60">
    <property type="entry name" value="RimM"/>
    <property type="match status" value="1"/>
</dbReference>
<dbReference type="HAMAP" id="MF_00014">
    <property type="entry name" value="Ribosome_mat_RimM"/>
    <property type="match status" value="1"/>
</dbReference>
<dbReference type="InterPro" id="IPR011033">
    <property type="entry name" value="PRC_barrel-like_sf"/>
</dbReference>
<dbReference type="InterPro" id="IPR056792">
    <property type="entry name" value="PRC_RimM"/>
</dbReference>
<dbReference type="InterPro" id="IPR011961">
    <property type="entry name" value="RimM"/>
</dbReference>
<dbReference type="InterPro" id="IPR002676">
    <property type="entry name" value="RimM_N"/>
</dbReference>
<dbReference type="InterPro" id="IPR036976">
    <property type="entry name" value="RimM_N_sf"/>
</dbReference>
<dbReference type="InterPro" id="IPR009000">
    <property type="entry name" value="Transl_B-barrel_sf"/>
</dbReference>
<dbReference type="NCBIfam" id="TIGR02273">
    <property type="entry name" value="16S_RimM"/>
    <property type="match status" value="1"/>
</dbReference>
<dbReference type="PANTHER" id="PTHR33692">
    <property type="entry name" value="RIBOSOME MATURATION FACTOR RIMM"/>
    <property type="match status" value="1"/>
</dbReference>
<dbReference type="PANTHER" id="PTHR33692:SF1">
    <property type="entry name" value="RIBOSOME MATURATION FACTOR RIMM"/>
    <property type="match status" value="1"/>
</dbReference>
<dbReference type="Pfam" id="PF24986">
    <property type="entry name" value="PRC_RimM"/>
    <property type="match status" value="1"/>
</dbReference>
<dbReference type="Pfam" id="PF01782">
    <property type="entry name" value="RimM"/>
    <property type="match status" value="1"/>
</dbReference>
<dbReference type="SUPFAM" id="SSF50346">
    <property type="entry name" value="PRC-barrel domain"/>
    <property type="match status" value="1"/>
</dbReference>
<dbReference type="SUPFAM" id="SSF50447">
    <property type="entry name" value="Translation proteins"/>
    <property type="match status" value="1"/>
</dbReference>
<accession>A6V124</accession>
<sequence length="175" mass="19704">MPTPADDLVVIGKIVSVYGIRGEVKVYSFTDPLDNLLDYRRWTLRRDGETRQAELVRGRLHGKVLAAKLKGLDDREEARTFTGYEICIPRSELPSLEEGEYYWYQLEGLKVIDQGGQLLGVIDHLLETGANDVMVVKPCAGSLDDRERLLPYTGQCVLSIDLAAGEMRVDWDADF</sequence>
<organism>
    <name type="scientific">Pseudomonas paraeruginosa (strain DSM 24068 / PA7)</name>
    <name type="common">Pseudomonas aeruginosa (strain PA7)</name>
    <dbReference type="NCBI Taxonomy" id="381754"/>
    <lineage>
        <taxon>Bacteria</taxon>
        <taxon>Pseudomonadati</taxon>
        <taxon>Pseudomonadota</taxon>
        <taxon>Gammaproteobacteria</taxon>
        <taxon>Pseudomonadales</taxon>
        <taxon>Pseudomonadaceae</taxon>
        <taxon>Pseudomonas</taxon>
        <taxon>Pseudomonas paraeruginosa</taxon>
    </lineage>
</organism>
<protein>
    <recommendedName>
        <fullName evidence="1">Ribosome maturation factor RimM</fullName>
    </recommendedName>
</protein>